<protein>
    <recommendedName>
        <fullName evidence="4">Dolichol-phosphate mannosyltransferase subunit 1</fullName>
        <ecNumber evidence="2">2.4.1.83</ecNumber>
    </recommendedName>
    <alternativeName>
        <fullName evidence="3">Dol-P-Man synthase1</fullName>
    </alternativeName>
    <alternativeName>
        <fullName evidence="4">Dolichol-phosphate mannose synthase subunit 1</fullName>
        <shortName evidence="4">DPM synthase subunit 1</shortName>
    </alternativeName>
</protein>
<dbReference type="EC" id="2.4.1.83" evidence="2"/>
<dbReference type="EMBL" id="KJ138997">
    <property type="protein sequence ID" value="AHL38937.1"/>
    <property type="molecule type" value="mRNA"/>
</dbReference>
<dbReference type="EMBL" id="AC069251">
    <property type="protein sequence ID" value="AAF80640.1"/>
    <property type="molecule type" value="Genomic_DNA"/>
</dbReference>
<dbReference type="EMBL" id="CP002684">
    <property type="protein sequence ID" value="AEE29989.1"/>
    <property type="molecule type" value="Genomic_DNA"/>
</dbReference>
<dbReference type="EMBL" id="BT005875">
    <property type="protein sequence ID" value="AAO64810.1"/>
    <property type="molecule type" value="mRNA"/>
</dbReference>
<dbReference type="EMBL" id="AK175559">
    <property type="protein sequence ID" value="BAD43322.1"/>
    <property type="molecule type" value="mRNA"/>
</dbReference>
<dbReference type="EMBL" id="AK227450">
    <property type="protein sequence ID" value="BAE99453.1"/>
    <property type="molecule type" value="mRNA"/>
</dbReference>
<dbReference type="EMBL" id="AY085986">
    <property type="protein sequence ID" value="AAM63196.1"/>
    <property type="status" value="ALT_INIT"/>
    <property type="molecule type" value="mRNA"/>
</dbReference>
<dbReference type="PIR" id="H86338">
    <property type="entry name" value="H86338"/>
</dbReference>
<dbReference type="RefSeq" id="NP_564118.1">
    <property type="nucleotide sequence ID" value="NM_101908.4"/>
</dbReference>
<dbReference type="SMR" id="Q9LM93"/>
<dbReference type="FunCoup" id="Q9LM93">
    <property type="interactions" value="4433"/>
</dbReference>
<dbReference type="STRING" id="3702.Q9LM93"/>
<dbReference type="CAZy" id="GT2">
    <property type="family name" value="Glycosyltransferase Family 2"/>
</dbReference>
<dbReference type="PaxDb" id="3702-AT1G20575.1"/>
<dbReference type="ProteomicsDB" id="220398"/>
<dbReference type="EnsemblPlants" id="AT1G20575.1">
    <property type="protein sequence ID" value="AT1G20575.1"/>
    <property type="gene ID" value="AT1G20575"/>
</dbReference>
<dbReference type="GeneID" id="838646"/>
<dbReference type="Gramene" id="AT1G20575.1">
    <property type="protein sequence ID" value="AT1G20575.1"/>
    <property type="gene ID" value="AT1G20575"/>
</dbReference>
<dbReference type="KEGG" id="ath:AT1G20575"/>
<dbReference type="Araport" id="AT1G20575"/>
<dbReference type="TAIR" id="AT1G20575">
    <property type="gene designation" value="DPMS1"/>
</dbReference>
<dbReference type="eggNOG" id="KOG2978">
    <property type="taxonomic scope" value="Eukaryota"/>
</dbReference>
<dbReference type="HOGENOM" id="CLU_033536_13_3_1"/>
<dbReference type="InParanoid" id="Q9LM93"/>
<dbReference type="OMA" id="KCFRREV"/>
<dbReference type="PhylomeDB" id="Q9LM93"/>
<dbReference type="BioCyc" id="ARA:AT1G20575-MONOMER"/>
<dbReference type="BioCyc" id="MetaCyc:AT1G20575-MONOMER"/>
<dbReference type="UniPathway" id="UPA00378"/>
<dbReference type="PRO" id="PR:Q9LM93"/>
<dbReference type="Proteomes" id="UP000006548">
    <property type="component" value="Chromosome 1"/>
</dbReference>
<dbReference type="ExpressionAtlas" id="Q9LM93">
    <property type="expression patterns" value="baseline and differential"/>
</dbReference>
<dbReference type="GO" id="GO:0033185">
    <property type="term" value="C:dolichol-phosphate-mannose synthase complex"/>
    <property type="evidence" value="ECO:0000353"/>
    <property type="project" value="TAIR"/>
</dbReference>
<dbReference type="GO" id="GO:0005783">
    <property type="term" value="C:endoplasmic reticulum"/>
    <property type="evidence" value="ECO:0000314"/>
    <property type="project" value="TAIR"/>
</dbReference>
<dbReference type="GO" id="GO:0005789">
    <property type="term" value="C:endoplasmic reticulum membrane"/>
    <property type="evidence" value="ECO:0007669"/>
    <property type="project" value="UniProtKB-SubCell"/>
</dbReference>
<dbReference type="GO" id="GO:0004582">
    <property type="term" value="F:dolichyl-phosphate beta-D-mannosyltransferase activity"/>
    <property type="evidence" value="ECO:0007669"/>
    <property type="project" value="UniProtKB-EC"/>
</dbReference>
<dbReference type="GO" id="GO:0046872">
    <property type="term" value="F:metal ion binding"/>
    <property type="evidence" value="ECO:0000250"/>
    <property type="project" value="UniProtKB"/>
</dbReference>
<dbReference type="GO" id="GO:0180047">
    <property type="term" value="P:dolichol phosphate mannose biosynthetic process"/>
    <property type="evidence" value="ECO:0000250"/>
    <property type="project" value="UniProtKB"/>
</dbReference>
<dbReference type="GO" id="GO:0035269">
    <property type="term" value="P:protein O-linked mannosylation"/>
    <property type="evidence" value="ECO:0000250"/>
    <property type="project" value="UniProtKB"/>
</dbReference>
<dbReference type="GO" id="GO:0060359">
    <property type="term" value="P:response to ammonium ion"/>
    <property type="evidence" value="ECO:0000315"/>
    <property type="project" value="TAIR"/>
</dbReference>
<dbReference type="CDD" id="cd06442">
    <property type="entry name" value="DPM1_like"/>
    <property type="match status" value="1"/>
</dbReference>
<dbReference type="FunFam" id="3.90.550.10:FF:000082">
    <property type="entry name" value="Dolichol-phosphate mannosyltransferase subunit 1"/>
    <property type="match status" value="1"/>
</dbReference>
<dbReference type="Gene3D" id="3.90.550.10">
    <property type="entry name" value="Spore Coat Polysaccharide Biosynthesis Protein SpsA, Chain A"/>
    <property type="match status" value="1"/>
</dbReference>
<dbReference type="InterPro" id="IPR039528">
    <property type="entry name" value="DPM1-like"/>
</dbReference>
<dbReference type="InterPro" id="IPR001173">
    <property type="entry name" value="Glyco_trans_2-like"/>
</dbReference>
<dbReference type="InterPro" id="IPR029044">
    <property type="entry name" value="Nucleotide-diphossugar_trans"/>
</dbReference>
<dbReference type="PANTHER" id="PTHR43398">
    <property type="entry name" value="DOLICHOL-PHOSPHATE MANNOSYLTRANSFERASE SUBUNIT 1"/>
    <property type="match status" value="1"/>
</dbReference>
<dbReference type="PANTHER" id="PTHR43398:SF1">
    <property type="entry name" value="DOLICHOL-PHOSPHATE MANNOSYLTRANSFERASE SUBUNIT 1"/>
    <property type="match status" value="1"/>
</dbReference>
<dbReference type="Pfam" id="PF00535">
    <property type="entry name" value="Glycos_transf_2"/>
    <property type="match status" value="1"/>
</dbReference>
<dbReference type="SUPFAM" id="SSF53448">
    <property type="entry name" value="Nucleotide-diphospho-sugar transferases"/>
    <property type="match status" value="1"/>
</dbReference>
<dbReference type="PROSITE" id="PS00447">
    <property type="entry name" value="DNA_POLYMERASE_A"/>
    <property type="match status" value="1"/>
</dbReference>
<reference key="1">
    <citation type="journal article" date="2014" name="Plant J.">
        <title>The plant glycosyltransferase clone collection for functional genomics.</title>
        <authorList>
            <person name="Lao J."/>
            <person name="Oikawa A."/>
            <person name="Bromley J.R."/>
            <person name="McInerney P."/>
            <person name="Suttangkakul A."/>
            <person name="Smith-Moritz A.M."/>
            <person name="Plahar H."/>
            <person name="Chiu T.-Y."/>
            <person name="Gonzalez Fernandez-Nino S.M.G."/>
            <person name="Ebert B."/>
            <person name="Yang F."/>
            <person name="Christiansen K.M."/>
            <person name="Hansen S.F."/>
            <person name="Stonebloom S."/>
            <person name="Adams P.D."/>
            <person name="Ronald P.C."/>
            <person name="Hillson N.J."/>
            <person name="Hadi M.Z."/>
            <person name="Vega-Sanchez M.E."/>
            <person name="Loque D."/>
            <person name="Scheller H.V."/>
            <person name="Heazlewood J.L."/>
        </authorList>
    </citation>
    <scope>NUCLEOTIDE SEQUENCE [MRNA]</scope>
    <source>
        <strain>cv. Columbia</strain>
    </source>
</reference>
<reference key="2">
    <citation type="journal article" date="2000" name="Nature">
        <title>Sequence and analysis of chromosome 1 of the plant Arabidopsis thaliana.</title>
        <authorList>
            <person name="Theologis A."/>
            <person name="Ecker J.R."/>
            <person name="Palm C.J."/>
            <person name="Federspiel N.A."/>
            <person name="Kaul S."/>
            <person name="White O."/>
            <person name="Alonso J."/>
            <person name="Altafi H."/>
            <person name="Araujo R."/>
            <person name="Bowman C.L."/>
            <person name="Brooks S.Y."/>
            <person name="Buehler E."/>
            <person name="Chan A."/>
            <person name="Chao Q."/>
            <person name="Chen H."/>
            <person name="Cheuk R.F."/>
            <person name="Chin C.W."/>
            <person name="Chung M.K."/>
            <person name="Conn L."/>
            <person name="Conway A.B."/>
            <person name="Conway A.R."/>
            <person name="Creasy T.H."/>
            <person name="Dewar K."/>
            <person name="Dunn P."/>
            <person name="Etgu P."/>
            <person name="Feldblyum T.V."/>
            <person name="Feng J.-D."/>
            <person name="Fong B."/>
            <person name="Fujii C.Y."/>
            <person name="Gill J.E."/>
            <person name="Goldsmith A.D."/>
            <person name="Haas B."/>
            <person name="Hansen N.F."/>
            <person name="Hughes B."/>
            <person name="Huizar L."/>
            <person name="Hunter J.L."/>
            <person name="Jenkins J."/>
            <person name="Johnson-Hopson C."/>
            <person name="Khan S."/>
            <person name="Khaykin E."/>
            <person name="Kim C.J."/>
            <person name="Koo H.L."/>
            <person name="Kremenetskaia I."/>
            <person name="Kurtz D.B."/>
            <person name="Kwan A."/>
            <person name="Lam B."/>
            <person name="Langin-Hooper S."/>
            <person name="Lee A."/>
            <person name="Lee J.M."/>
            <person name="Lenz C.A."/>
            <person name="Li J.H."/>
            <person name="Li Y.-P."/>
            <person name="Lin X."/>
            <person name="Liu S.X."/>
            <person name="Liu Z.A."/>
            <person name="Luros J.S."/>
            <person name="Maiti R."/>
            <person name="Marziali A."/>
            <person name="Militscher J."/>
            <person name="Miranda M."/>
            <person name="Nguyen M."/>
            <person name="Nierman W.C."/>
            <person name="Osborne B.I."/>
            <person name="Pai G."/>
            <person name="Peterson J."/>
            <person name="Pham P.K."/>
            <person name="Rizzo M."/>
            <person name="Rooney T."/>
            <person name="Rowley D."/>
            <person name="Sakano H."/>
            <person name="Salzberg S.L."/>
            <person name="Schwartz J.R."/>
            <person name="Shinn P."/>
            <person name="Southwick A.M."/>
            <person name="Sun H."/>
            <person name="Tallon L.J."/>
            <person name="Tambunga G."/>
            <person name="Toriumi M.J."/>
            <person name="Town C.D."/>
            <person name="Utterback T."/>
            <person name="Van Aken S."/>
            <person name="Vaysberg M."/>
            <person name="Vysotskaia V.S."/>
            <person name="Walker M."/>
            <person name="Wu D."/>
            <person name="Yu G."/>
            <person name="Fraser C.M."/>
            <person name="Venter J.C."/>
            <person name="Davis R.W."/>
        </authorList>
    </citation>
    <scope>NUCLEOTIDE SEQUENCE [LARGE SCALE GENOMIC DNA]</scope>
    <source>
        <strain>cv. Columbia</strain>
    </source>
</reference>
<reference key="3">
    <citation type="journal article" date="2017" name="Plant J.">
        <title>Araport11: a complete reannotation of the Arabidopsis thaliana reference genome.</title>
        <authorList>
            <person name="Cheng C.Y."/>
            <person name="Krishnakumar V."/>
            <person name="Chan A.P."/>
            <person name="Thibaud-Nissen F."/>
            <person name="Schobel S."/>
            <person name="Town C.D."/>
        </authorList>
    </citation>
    <scope>GENOME REANNOTATION</scope>
    <source>
        <strain>cv. Columbia</strain>
    </source>
</reference>
<reference key="4">
    <citation type="journal article" date="2003" name="Science">
        <title>Empirical analysis of transcriptional activity in the Arabidopsis genome.</title>
        <authorList>
            <person name="Yamada K."/>
            <person name="Lim J."/>
            <person name="Dale J.M."/>
            <person name="Chen H."/>
            <person name="Shinn P."/>
            <person name="Palm C.J."/>
            <person name="Southwick A.M."/>
            <person name="Wu H.C."/>
            <person name="Kim C.J."/>
            <person name="Nguyen M."/>
            <person name="Pham P.K."/>
            <person name="Cheuk R.F."/>
            <person name="Karlin-Newmann G."/>
            <person name="Liu S.X."/>
            <person name="Lam B."/>
            <person name="Sakano H."/>
            <person name="Wu T."/>
            <person name="Yu G."/>
            <person name="Miranda M."/>
            <person name="Quach H.L."/>
            <person name="Tripp M."/>
            <person name="Chang C.H."/>
            <person name="Lee J.M."/>
            <person name="Toriumi M.J."/>
            <person name="Chan M.M."/>
            <person name="Tang C.C."/>
            <person name="Onodera C.S."/>
            <person name="Deng J.M."/>
            <person name="Akiyama K."/>
            <person name="Ansari Y."/>
            <person name="Arakawa T."/>
            <person name="Banh J."/>
            <person name="Banno F."/>
            <person name="Bowser L."/>
            <person name="Brooks S.Y."/>
            <person name="Carninci P."/>
            <person name="Chao Q."/>
            <person name="Choy N."/>
            <person name="Enju A."/>
            <person name="Goldsmith A.D."/>
            <person name="Gurjal M."/>
            <person name="Hansen N.F."/>
            <person name="Hayashizaki Y."/>
            <person name="Johnson-Hopson C."/>
            <person name="Hsuan V.W."/>
            <person name="Iida K."/>
            <person name="Karnes M."/>
            <person name="Khan S."/>
            <person name="Koesema E."/>
            <person name="Ishida J."/>
            <person name="Jiang P.X."/>
            <person name="Jones T."/>
            <person name="Kawai J."/>
            <person name="Kamiya A."/>
            <person name="Meyers C."/>
            <person name="Nakajima M."/>
            <person name="Narusaka M."/>
            <person name="Seki M."/>
            <person name="Sakurai T."/>
            <person name="Satou M."/>
            <person name="Tamse R."/>
            <person name="Vaysberg M."/>
            <person name="Wallender E.K."/>
            <person name="Wong C."/>
            <person name="Yamamura Y."/>
            <person name="Yuan S."/>
            <person name="Shinozaki K."/>
            <person name="Davis R.W."/>
            <person name="Theologis A."/>
            <person name="Ecker J.R."/>
        </authorList>
    </citation>
    <scope>NUCLEOTIDE SEQUENCE [LARGE SCALE MRNA]</scope>
    <source>
        <strain>cv. Columbia</strain>
    </source>
</reference>
<reference key="5">
    <citation type="submission" date="2006-07" db="EMBL/GenBank/DDBJ databases">
        <title>Large-scale analysis of RIKEN Arabidopsis full-length (RAFL) cDNAs.</title>
        <authorList>
            <person name="Totoki Y."/>
            <person name="Seki M."/>
            <person name="Ishida J."/>
            <person name="Nakajima M."/>
            <person name="Enju A."/>
            <person name="Kamiya A."/>
            <person name="Narusaka M."/>
            <person name="Shin-i T."/>
            <person name="Nakagawa M."/>
            <person name="Sakamoto N."/>
            <person name="Oishi K."/>
            <person name="Kohara Y."/>
            <person name="Kobayashi M."/>
            <person name="Toyoda A."/>
            <person name="Sakaki Y."/>
            <person name="Sakurai T."/>
            <person name="Iida K."/>
            <person name="Akiyama K."/>
            <person name="Satou M."/>
            <person name="Toyoda T."/>
            <person name="Konagaya A."/>
            <person name="Carninci P."/>
            <person name="Kawai J."/>
            <person name="Hayashizaki Y."/>
            <person name="Shinozaki K."/>
        </authorList>
    </citation>
    <scope>NUCLEOTIDE SEQUENCE [LARGE SCALE MRNA]</scope>
    <source>
        <strain>cv. Columbia</strain>
    </source>
</reference>
<reference key="6">
    <citation type="submission" date="2002-03" db="EMBL/GenBank/DDBJ databases">
        <title>Full-length cDNA from Arabidopsis thaliana.</title>
        <authorList>
            <person name="Brover V.V."/>
            <person name="Troukhan M.E."/>
            <person name="Alexandrov N.A."/>
            <person name="Lu Y.-P."/>
            <person name="Flavell R.B."/>
            <person name="Feldmann K.A."/>
        </authorList>
    </citation>
    <scope>NUCLEOTIDE SEQUENCE [LARGE SCALE MRNA]</scope>
</reference>
<reference key="7">
    <citation type="journal article" date="2011" name="Plant Cell">
        <title>DOLICHOL PHOSPHATE MANNOSE SYNTHASE1 mediates the biogenesis of isoprenyl-linked glycans and influences development, stress response, and ammonium hypersensitivity in Arabidopsis.</title>
        <authorList>
            <person name="Jadid N."/>
            <person name="Mialoundama A.S."/>
            <person name="Heintz D."/>
            <person name="Ayoub D."/>
            <person name="Erhardt M."/>
            <person name="Mutterer J."/>
            <person name="Meyer D."/>
            <person name="Alioua A."/>
            <person name="Van Dorsselaer A."/>
            <person name="Rahier A."/>
            <person name="Camara B."/>
            <person name="Bouvier F."/>
        </authorList>
    </citation>
    <scope>FUNCTION</scope>
    <scope>IDENTIFICATION BY MASS SPECTROMETRY</scope>
    <scope>CATALYTIC ACTIVITY</scope>
    <scope>SUBCELLULAR LOCATION</scope>
    <scope>DISRUPTION PHENOTYPE</scope>
</reference>
<accession>Q9LM93</accession>
<accession>Q8LDI9</accession>
<evidence type="ECO:0000250" key="1">
    <source>
        <dbReference type="UniProtKB" id="Q8U4M3"/>
    </source>
</evidence>
<evidence type="ECO:0000269" key="2">
    <source>
    </source>
</evidence>
<evidence type="ECO:0000303" key="3">
    <source>
    </source>
</evidence>
<evidence type="ECO:0000305" key="4"/>
<evidence type="ECO:0000305" key="5">
    <source>
    </source>
</evidence>
<evidence type="ECO:0000312" key="6">
    <source>
        <dbReference type="Araport" id="AT1G20575"/>
    </source>
</evidence>
<evidence type="ECO:0000312" key="7">
    <source>
        <dbReference type="EMBL" id="AAF80640.1"/>
    </source>
</evidence>
<feature type="chain" id="PRO_0000440169" description="Dolichol-phosphate mannosyltransferase subunit 1">
    <location>
        <begin position="1"/>
        <end position="246"/>
    </location>
</feature>
<feature type="binding site" evidence="1">
    <location>
        <position position="20"/>
    </location>
    <ligand>
        <name>GDP-alpha-D-mannose</name>
        <dbReference type="ChEBI" id="CHEBI:57527"/>
    </ligand>
</feature>
<feature type="binding site" evidence="1">
    <location>
        <position position="22"/>
    </location>
    <ligand>
        <name>GDP-alpha-D-mannose</name>
        <dbReference type="ChEBI" id="CHEBI:57527"/>
    </ligand>
</feature>
<feature type="binding site" evidence="1">
    <location>
        <position position="24"/>
    </location>
    <ligand>
        <name>GDP-alpha-D-mannose</name>
        <dbReference type="ChEBI" id="CHEBI:57527"/>
    </ligand>
</feature>
<feature type="binding site" evidence="1">
    <location>
        <position position="49"/>
    </location>
    <ligand>
        <name>GDP-alpha-D-mannose</name>
        <dbReference type="ChEBI" id="CHEBI:57527"/>
    </ligand>
</feature>
<feature type="binding site" evidence="1">
    <location>
        <position position="51"/>
    </location>
    <ligand>
        <name>GDP-alpha-D-mannose</name>
        <dbReference type="ChEBI" id="CHEBI:57527"/>
    </ligand>
</feature>
<feature type="binding site" evidence="1">
    <location>
        <position position="104"/>
    </location>
    <ligand>
        <name>GDP-alpha-D-mannose</name>
        <dbReference type="ChEBI" id="CHEBI:57527"/>
    </ligand>
</feature>
<feature type="binding site" evidence="1">
    <location>
        <position position="105"/>
    </location>
    <ligand>
        <name>GDP-alpha-D-mannose</name>
        <dbReference type="ChEBI" id="CHEBI:57527"/>
    </ligand>
</feature>
<feature type="binding site" evidence="1">
    <location>
        <position position="106"/>
    </location>
    <ligand>
        <name>GDP-alpha-D-mannose</name>
        <dbReference type="ChEBI" id="CHEBI:57527"/>
    </ligand>
</feature>
<feature type="binding site" evidence="1">
    <location>
        <position position="106"/>
    </location>
    <ligand>
        <name>Mg(2+)</name>
        <dbReference type="ChEBI" id="CHEBI:18420"/>
    </ligand>
</feature>
<feature type="binding site" evidence="1">
    <location>
        <position position="106"/>
    </location>
    <ligand>
        <name>Mn(2+)</name>
        <dbReference type="ChEBI" id="CHEBI:29035"/>
    </ligand>
</feature>
<feature type="binding site" evidence="1">
    <location>
        <position position="133"/>
    </location>
    <ligand>
        <name>GDP-alpha-D-mannose</name>
        <dbReference type="ChEBI" id="CHEBI:57527"/>
    </ligand>
</feature>
<feature type="binding site" evidence="1">
    <location>
        <position position="220"/>
    </location>
    <ligand>
        <name>GDP-alpha-D-mannose</name>
        <dbReference type="ChEBI" id="CHEBI:57527"/>
    </ligand>
</feature>
<feature type="binding site" evidence="1">
    <location>
        <position position="226"/>
    </location>
    <ligand>
        <name>GDP-alpha-D-mannose</name>
        <dbReference type="ChEBI" id="CHEBI:57527"/>
    </ligand>
</feature>
<feature type="sequence conflict" description="In Ref. 6; AAM63196." evidence="4" ref="6">
    <original>Y</original>
    <variation>F</variation>
    <location>
        <position position="22"/>
    </location>
</feature>
<gene>
    <name evidence="3" type="primary">DPMS1</name>
    <name evidence="6" type="ordered locus">At1g20575</name>
    <name evidence="7" type="ORF">F2D10.6</name>
</gene>
<keyword id="KW-0256">Endoplasmic reticulum</keyword>
<keyword id="KW-0328">Glycosyltransferase</keyword>
<keyword id="KW-0460">Magnesium</keyword>
<keyword id="KW-0464">Manganese</keyword>
<keyword id="KW-0472">Membrane</keyword>
<keyword id="KW-0479">Metal-binding</keyword>
<keyword id="KW-1185">Reference proteome</keyword>
<keyword id="KW-0346">Stress response</keyword>
<keyword id="KW-0808">Transferase</keyword>
<proteinExistence type="evidence at protein level"/>
<organism>
    <name type="scientific">Arabidopsis thaliana</name>
    <name type="common">Mouse-ear cress</name>
    <dbReference type="NCBI Taxonomy" id="3702"/>
    <lineage>
        <taxon>Eukaryota</taxon>
        <taxon>Viridiplantae</taxon>
        <taxon>Streptophyta</taxon>
        <taxon>Embryophyta</taxon>
        <taxon>Tracheophyta</taxon>
        <taxon>Spermatophyta</taxon>
        <taxon>Magnoliopsida</taxon>
        <taxon>eudicotyledons</taxon>
        <taxon>Gunneridae</taxon>
        <taxon>Pentapetalae</taxon>
        <taxon>rosids</taxon>
        <taxon>malvids</taxon>
        <taxon>Brassicales</taxon>
        <taxon>Brassicaceae</taxon>
        <taxon>Camelineae</taxon>
        <taxon>Arabidopsis</taxon>
    </lineage>
</organism>
<name>DPM1_ARATH</name>
<sequence>MADEMETKGEKKYKYSIIIPTYNERLNIAIIVYLIFKHLRDVDFEIIVVDDGSPDGTQEIVKQLQQLYGEDRILLRARAKKLGLGTAYIHGLKHATGDFVVIMDADLSHHPKYLPSFIKKQLETNASIVTGTRYVKGGGVHGWNLMRKLTSRGANVLAQTLLWPGVSDLTGSFRLYKKSALEDVISSCVSKGYVFQMEMIVRATRKGYHIEEVPITFVDRVFGTSKLGGSEIVEYLKGLVYLLLTT</sequence>
<comment type="function">
    <text evidence="2">Transfers mannose from GDP-mannose to dolichol monophosphate to form dolichol phosphate mannose (Dol-P-Man) which is the mannosyl donor in pathways leading to N-glycosylation, glycosyl phosphatidylinositol membrane anchoring, and O-mannosylation of proteins; catalytic subunit of the dolichol-phosphate mannose (DPM) synthase complex. Plays a role in plant development and physiology, sensitivity to ammonium stress and endoplasmic reticulum stress response.</text>
</comment>
<comment type="catalytic activity">
    <reaction evidence="2">
        <text>a di-trans,poly-cis-dolichyl phosphate + GDP-alpha-D-mannose = a di-trans,poly-cis-dolichyl beta-D-mannosyl phosphate + GDP</text>
        <dbReference type="Rhea" id="RHEA:21184"/>
        <dbReference type="Rhea" id="RHEA-COMP:19498"/>
        <dbReference type="Rhea" id="RHEA-COMP:19501"/>
        <dbReference type="ChEBI" id="CHEBI:57527"/>
        <dbReference type="ChEBI" id="CHEBI:57683"/>
        <dbReference type="ChEBI" id="CHEBI:58189"/>
        <dbReference type="ChEBI" id="CHEBI:58211"/>
        <dbReference type="EC" id="2.4.1.83"/>
    </reaction>
</comment>
<comment type="cofactor">
    <cofactor evidence="1">
        <name>Mg(2+)</name>
        <dbReference type="ChEBI" id="CHEBI:18420"/>
    </cofactor>
    <cofactor evidence="1">
        <name>Mn(2+)</name>
        <dbReference type="ChEBI" id="CHEBI:29035"/>
    </cofactor>
    <cofactor evidence="1">
        <name>Ca(2+)</name>
        <dbReference type="ChEBI" id="CHEBI:29108"/>
    </cofactor>
    <text evidence="1">Binds 1 divalent metal cation.</text>
</comment>
<comment type="pathway">
    <text evidence="4">Protein modification; protein glycosylation.</text>
</comment>
<comment type="subunit">
    <text evidence="2">Component of the dolichol-phosphate mannose (DPM) synthase complex composed of DPMS1, DPMS2 and DPMS3; in the complex interacts directly with DPMS3.</text>
</comment>
<comment type="subcellular location">
    <subcellularLocation>
        <location evidence="2">Endoplasmic reticulum membrane</location>
        <topology evidence="5">Peripheral membrane protein</topology>
    </subcellularLocation>
    <text evidence="5">Anchored to the ER membrane by DPMS2 and DPMS3 of the dolichol-phosphate mannose (DPM) synthase complex.</text>
</comment>
<comment type="disruption phenotype">
    <text evidence="2">Reduced root growth. Slight reduction of chlorophyll content. Wrinkled seed coat. Hypersensitivity to ammonium.</text>
</comment>
<comment type="miscellaneous">
    <text evidence="2">Plants over-expressing DPMS1 show altered stem branch diameter and morphology, perturbation of the vascular bundle arrangements, wrinkled seed coat and constitutive endoplasmic reticulum stress response.</text>
</comment>
<comment type="similarity">
    <text evidence="4">Belongs to the glycosyltransferase 2 family.</text>
</comment>
<comment type="sequence caution" evidence="4">
    <conflict type="erroneous initiation">
        <sequence resource="EMBL-CDS" id="AAM63196"/>
    </conflict>
    <text>Truncated N-terminus.</text>
</comment>